<proteinExistence type="inferred from homology"/>
<sequence>MKDFESLKFQINELVNKELEVLNLKVYQINNLKEFENDMIQILVEDSLQANKPLDFDILIKANDLVSNKIDQLIKTKDKYLLEISSSGIEKQIRSQEELLKALEQWVYVQLNNEIKKVKEFEGYVTKYNDQTNTFTFSFFIKGQKKNLDVKFDDIKFIRYAVRF</sequence>
<protein>
    <recommendedName>
        <fullName evidence="1">Ribosome maturation factor RimP</fullName>
    </recommendedName>
</protein>
<evidence type="ECO:0000255" key="1">
    <source>
        <dbReference type="HAMAP-Rule" id="MF_01077"/>
    </source>
</evidence>
<accession>Q6MTP6</accession>
<name>RIMP_MYCMS</name>
<organism>
    <name type="scientific">Mycoplasma mycoides subsp. mycoides SC (strain CCUG 32753 / NCTC 10114 / PG1)</name>
    <dbReference type="NCBI Taxonomy" id="272632"/>
    <lineage>
        <taxon>Bacteria</taxon>
        <taxon>Bacillati</taxon>
        <taxon>Mycoplasmatota</taxon>
        <taxon>Mollicutes</taxon>
        <taxon>Mycoplasmataceae</taxon>
        <taxon>Mycoplasma</taxon>
    </lineage>
</organism>
<keyword id="KW-0963">Cytoplasm</keyword>
<keyword id="KW-1185">Reference proteome</keyword>
<keyword id="KW-0690">Ribosome biogenesis</keyword>
<gene>
    <name evidence="1" type="primary">rimP</name>
    <name type="ordered locus">MSC_0353</name>
</gene>
<comment type="function">
    <text evidence="1">Required for maturation of 30S ribosomal subunits.</text>
</comment>
<comment type="subcellular location">
    <subcellularLocation>
        <location evidence="1">Cytoplasm</location>
    </subcellularLocation>
</comment>
<comment type="similarity">
    <text evidence="1">Belongs to the RimP family.</text>
</comment>
<reference key="1">
    <citation type="journal article" date="2004" name="Genome Res.">
        <title>The genome sequence of Mycoplasma mycoides subsp. mycoides SC type strain PG1T, the causative agent of contagious bovine pleuropneumonia (CBPP).</title>
        <authorList>
            <person name="Westberg J."/>
            <person name="Persson A."/>
            <person name="Holmberg A."/>
            <person name="Goesmann A."/>
            <person name="Lundeberg J."/>
            <person name="Johansson K.-E."/>
            <person name="Pettersson B."/>
            <person name="Uhlen M."/>
        </authorList>
    </citation>
    <scope>NUCLEOTIDE SEQUENCE [LARGE SCALE GENOMIC DNA]</scope>
    <source>
        <strain>CCUG 32753 / NCTC 10114 / PG1</strain>
    </source>
</reference>
<feature type="chain" id="PRO_0000181890" description="Ribosome maturation factor RimP">
    <location>
        <begin position="1"/>
        <end position="164"/>
    </location>
</feature>
<dbReference type="EMBL" id="BX293980">
    <property type="protein sequence ID" value="CAE76990.1"/>
    <property type="molecule type" value="Genomic_DNA"/>
</dbReference>
<dbReference type="RefSeq" id="NP_975348.1">
    <property type="nucleotide sequence ID" value="NC_005364.2"/>
</dbReference>
<dbReference type="RefSeq" id="WP_011166546.1">
    <property type="nucleotide sequence ID" value="NC_005364.2"/>
</dbReference>
<dbReference type="SMR" id="Q6MTP6"/>
<dbReference type="STRING" id="272632.MSC_0353"/>
<dbReference type="KEGG" id="mmy:MSC_0353"/>
<dbReference type="PATRIC" id="fig|272632.4.peg.381"/>
<dbReference type="eggNOG" id="COG0779">
    <property type="taxonomic scope" value="Bacteria"/>
</dbReference>
<dbReference type="HOGENOM" id="CLU_070525_2_3_14"/>
<dbReference type="Proteomes" id="UP000001016">
    <property type="component" value="Chromosome"/>
</dbReference>
<dbReference type="GO" id="GO:0005829">
    <property type="term" value="C:cytosol"/>
    <property type="evidence" value="ECO:0007669"/>
    <property type="project" value="TreeGrafter"/>
</dbReference>
<dbReference type="GO" id="GO:0000028">
    <property type="term" value="P:ribosomal small subunit assembly"/>
    <property type="evidence" value="ECO:0007669"/>
    <property type="project" value="TreeGrafter"/>
</dbReference>
<dbReference type="GO" id="GO:0006412">
    <property type="term" value="P:translation"/>
    <property type="evidence" value="ECO:0007669"/>
    <property type="project" value="TreeGrafter"/>
</dbReference>
<dbReference type="CDD" id="cd01734">
    <property type="entry name" value="YlxS_C"/>
    <property type="match status" value="1"/>
</dbReference>
<dbReference type="Gene3D" id="2.30.30.180">
    <property type="entry name" value="Ribosome maturation factor RimP, C-terminal domain"/>
    <property type="match status" value="1"/>
</dbReference>
<dbReference type="HAMAP" id="MF_01077">
    <property type="entry name" value="RimP"/>
    <property type="match status" value="1"/>
</dbReference>
<dbReference type="InterPro" id="IPR003728">
    <property type="entry name" value="Ribosome_maturation_RimP"/>
</dbReference>
<dbReference type="InterPro" id="IPR028998">
    <property type="entry name" value="RimP_C"/>
</dbReference>
<dbReference type="InterPro" id="IPR036847">
    <property type="entry name" value="RimP_C_sf"/>
</dbReference>
<dbReference type="InterPro" id="IPR028989">
    <property type="entry name" value="RimP_N"/>
</dbReference>
<dbReference type="InterPro" id="IPR035956">
    <property type="entry name" value="RimP_N_sf"/>
</dbReference>
<dbReference type="NCBIfam" id="NF011236">
    <property type="entry name" value="PRK14643.1"/>
    <property type="match status" value="1"/>
</dbReference>
<dbReference type="PANTHER" id="PTHR33867">
    <property type="entry name" value="RIBOSOME MATURATION FACTOR RIMP"/>
    <property type="match status" value="1"/>
</dbReference>
<dbReference type="PANTHER" id="PTHR33867:SF1">
    <property type="entry name" value="RIBOSOME MATURATION FACTOR RIMP"/>
    <property type="match status" value="1"/>
</dbReference>
<dbReference type="Pfam" id="PF02576">
    <property type="entry name" value="RimP_N"/>
    <property type="match status" value="1"/>
</dbReference>
<dbReference type="SUPFAM" id="SSF74942">
    <property type="entry name" value="YhbC-like, C-terminal domain"/>
    <property type="match status" value="1"/>
</dbReference>
<dbReference type="SUPFAM" id="SSF75420">
    <property type="entry name" value="YhbC-like, N-terminal domain"/>
    <property type="match status" value="1"/>
</dbReference>